<proteinExistence type="inferred from homology"/>
<evidence type="ECO:0000255" key="1"/>
<evidence type="ECO:0000305" key="2"/>
<protein>
    <recommendedName>
        <fullName>Putative ion-transport protein YfeO</fullName>
    </recommendedName>
</protein>
<organism>
    <name type="scientific">Escherichia coli O6:H1 (strain CFT073 / ATCC 700928 / UPEC)</name>
    <dbReference type="NCBI Taxonomy" id="199310"/>
    <lineage>
        <taxon>Bacteria</taxon>
        <taxon>Pseudomonadati</taxon>
        <taxon>Pseudomonadota</taxon>
        <taxon>Gammaproteobacteria</taxon>
        <taxon>Enterobacterales</taxon>
        <taxon>Enterobacteriaceae</taxon>
        <taxon>Escherichia</taxon>
    </lineage>
</organism>
<keyword id="KW-1003">Cell membrane</keyword>
<keyword id="KW-0407">Ion channel</keyword>
<keyword id="KW-0406">Ion transport</keyword>
<keyword id="KW-0472">Membrane</keyword>
<keyword id="KW-1185">Reference proteome</keyword>
<keyword id="KW-0812">Transmembrane</keyword>
<keyword id="KW-1133">Transmembrane helix</keyword>
<keyword id="KW-0813">Transport</keyword>
<comment type="subcellular location">
    <subcellularLocation>
        <location evidence="2">Cell membrane</location>
        <topology evidence="2">Multi-pass membrane protein</topology>
    </subcellularLocation>
</comment>
<comment type="similarity">
    <text evidence="2">Belongs to the chloride channel (TC 2.A.49) family.</text>
</comment>
<accession>Q8FFD3</accession>
<dbReference type="EMBL" id="AE014075">
    <property type="protein sequence ID" value="AAN81378.1"/>
    <property type="molecule type" value="Genomic_DNA"/>
</dbReference>
<dbReference type="RefSeq" id="WP_000903092.1">
    <property type="nucleotide sequence ID" value="NZ_CP051263.1"/>
</dbReference>
<dbReference type="SMR" id="Q8FFD3"/>
<dbReference type="STRING" id="199310.c2928"/>
<dbReference type="KEGG" id="ecc:c2928"/>
<dbReference type="eggNOG" id="COG0038">
    <property type="taxonomic scope" value="Bacteria"/>
</dbReference>
<dbReference type="HOGENOM" id="CLU_053130_0_0_6"/>
<dbReference type="BioCyc" id="ECOL199310:C2928-MONOMER"/>
<dbReference type="Proteomes" id="UP000001410">
    <property type="component" value="Chromosome"/>
</dbReference>
<dbReference type="GO" id="GO:0005886">
    <property type="term" value="C:plasma membrane"/>
    <property type="evidence" value="ECO:0007669"/>
    <property type="project" value="UniProtKB-SubCell"/>
</dbReference>
<dbReference type="GO" id="GO:0015108">
    <property type="term" value="F:chloride transmembrane transporter activity"/>
    <property type="evidence" value="ECO:0007669"/>
    <property type="project" value="InterPro"/>
</dbReference>
<dbReference type="GO" id="GO:0005216">
    <property type="term" value="F:monoatomic ion channel activity"/>
    <property type="evidence" value="ECO:0007669"/>
    <property type="project" value="UniProtKB-UniRule"/>
</dbReference>
<dbReference type="CDD" id="cd00400">
    <property type="entry name" value="Voltage_gated_ClC"/>
    <property type="match status" value="1"/>
</dbReference>
<dbReference type="FunFam" id="1.10.3080.10:FF:000007">
    <property type="entry name" value="Putative ion-transport protein YfeO"/>
    <property type="match status" value="1"/>
</dbReference>
<dbReference type="Gene3D" id="1.10.3080.10">
    <property type="entry name" value="Clc chloride channel"/>
    <property type="match status" value="1"/>
</dbReference>
<dbReference type="HAMAP" id="MF_01115">
    <property type="entry name" value="CLC_YfeO"/>
    <property type="match status" value="1"/>
</dbReference>
<dbReference type="InterPro" id="IPR022969">
    <property type="entry name" value="Chloride_channel_YfeO"/>
</dbReference>
<dbReference type="InterPro" id="IPR014743">
    <property type="entry name" value="Cl-channel_core"/>
</dbReference>
<dbReference type="InterPro" id="IPR001807">
    <property type="entry name" value="ClC"/>
</dbReference>
<dbReference type="InterPro" id="IPR050368">
    <property type="entry name" value="ClC-type_chloride_channel"/>
</dbReference>
<dbReference type="NCBIfam" id="NF002971">
    <property type="entry name" value="PRK03655.1"/>
    <property type="match status" value="1"/>
</dbReference>
<dbReference type="PANTHER" id="PTHR43427">
    <property type="entry name" value="CHLORIDE CHANNEL PROTEIN CLC-E"/>
    <property type="match status" value="1"/>
</dbReference>
<dbReference type="PANTHER" id="PTHR43427:SF9">
    <property type="entry name" value="ION-TRANSPORT PROTEIN YFEO-RELATED"/>
    <property type="match status" value="1"/>
</dbReference>
<dbReference type="Pfam" id="PF00654">
    <property type="entry name" value="Voltage_CLC"/>
    <property type="match status" value="1"/>
</dbReference>
<dbReference type="PRINTS" id="PR00762">
    <property type="entry name" value="CLCHANNEL"/>
</dbReference>
<dbReference type="SUPFAM" id="SSF81340">
    <property type="entry name" value="Clc chloride channel"/>
    <property type="match status" value="1"/>
</dbReference>
<gene>
    <name type="primary">yfeO</name>
    <name type="ordered locus">c2928</name>
</gene>
<name>YFEO_ECOL6</name>
<reference key="1">
    <citation type="journal article" date="2002" name="Proc. Natl. Acad. Sci. U.S.A.">
        <title>Extensive mosaic structure revealed by the complete genome sequence of uropathogenic Escherichia coli.</title>
        <authorList>
            <person name="Welch R.A."/>
            <person name="Burland V."/>
            <person name="Plunkett G. III"/>
            <person name="Redford P."/>
            <person name="Roesch P."/>
            <person name="Rasko D."/>
            <person name="Buckles E.L."/>
            <person name="Liou S.-R."/>
            <person name="Boutin A."/>
            <person name="Hackett J."/>
            <person name="Stroud D."/>
            <person name="Mayhew G.F."/>
            <person name="Rose D.J."/>
            <person name="Zhou S."/>
            <person name="Schwartz D.C."/>
            <person name="Perna N.T."/>
            <person name="Mobley H.L.T."/>
            <person name="Donnenberg M.S."/>
            <person name="Blattner F.R."/>
        </authorList>
    </citation>
    <scope>NUCLEOTIDE SEQUENCE [LARGE SCALE GENOMIC DNA]</scope>
    <source>
        <strain>CFT073 / ATCC 700928 / UPEC</strain>
    </source>
</reference>
<feature type="chain" id="PRO_0000094496" description="Putative ion-transport protein YfeO">
    <location>
        <begin position="1"/>
        <end position="418"/>
    </location>
</feature>
<feature type="transmembrane region" description="Helical" evidence="1">
    <location>
        <begin position="9"/>
        <end position="31"/>
    </location>
</feature>
<feature type="transmembrane region" description="Helical" evidence="1">
    <location>
        <begin position="55"/>
        <end position="77"/>
    </location>
</feature>
<feature type="transmembrane region" description="Helical" evidence="1">
    <location>
        <begin position="90"/>
        <end position="112"/>
    </location>
</feature>
<feature type="transmembrane region" description="Helical" evidence="1">
    <location>
        <begin position="122"/>
        <end position="140"/>
    </location>
</feature>
<feature type="transmembrane region" description="Helical" evidence="1">
    <location>
        <begin position="147"/>
        <end position="169"/>
    </location>
</feature>
<feature type="transmembrane region" description="Helical" evidence="1">
    <location>
        <begin position="189"/>
        <end position="211"/>
    </location>
</feature>
<feature type="transmembrane region" description="Helical" evidence="1">
    <location>
        <begin position="223"/>
        <end position="244"/>
    </location>
</feature>
<feature type="transmembrane region" description="Helical" evidence="1">
    <location>
        <begin position="259"/>
        <end position="281"/>
    </location>
</feature>
<feature type="transmembrane region" description="Helical" evidence="1">
    <location>
        <begin position="301"/>
        <end position="323"/>
    </location>
</feature>
<feature type="transmembrane region" description="Helical" evidence="1">
    <location>
        <begin position="343"/>
        <end position="363"/>
    </location>
</feature>
<feature type="transmembrane region" description="Helical" evidence="1">
    <location>
        <begin position="376"/>
        <end position="398"/>
    </location>
</feature>
<sequence>MLHPRARTMLLLSLPAVAIGIASSLILIMVMKIASVLQNLLWQRLPGTLGIAQDSPLWIIGVLTLTGIAVGLVIRFSQGHAGPDPACEPLIGAPIPPSALPGLIVALILGLAGGVSLGPEHPIITVNIALAVAIGARLLPRVNRMEWTILASAGTIGALFGTPVAAALIFSQTLNGSNEVPLWDRLFAPLMAAAAGALTTGLFFHPHFSLPIAHYGQMEMTDILSGAIVAAIAIAAGMVAVWCLPRLHAMMHQMKNPVFVLGIGGFILGILGVIGGPVSLFKGLDEMQQMVANQAFSTSDYFLLAVIKLAALVVAAASGFRGGRIFPAVFVGVALGLMLHEHVPAVPAAITVSCAILGIVLVVTRDGWLSLFMAAVVVPNTTLLPLLCIVMLPAWLLLAGKPMMMVNRQKQQPPHDNV</sequence>